<reference key="1">
    <citation type="journal article" date="2009" name="J. Bacteriol.">
        <title>Complete genome sequence and comparative genome analysis of enteropathogenic Escherichia coli O127:H6 strain E2348/69.</title>
        <authorList>
            <person name="Iguchi A."/>
            <person name="Thomson N.R."/>
            <person name="Ogura Y."/>
            <person name="Saunders D."/>
            <person name="Ooka T."/>
            <person name="Henderson I.R."/>
            <person name="Harris D."/>
            <person name="Asadulghani M."/>
            <person name="Kurokawa K."/>
            <person name="Dean P."/>
            <person name="Kenny B."/>
            <person name="Quail M.A."/>
            <person name="Thurston S."/>
            <person name="Dougan G."/>
            <person name="Hayashi T."/>
            <person name="Parkhill J."/>
            <person name="Frankel G."/>
        </authorList>
    </citation>
    <scope>NUCLEOTIDE SEQUENCE [LARGE SCALE GENOMIC DNA]</scope>
    <source>
        <strain>E2348/69 / EPEC</strain>
    </source>
</reference>
<feature type="chain" id="PRO_0000385916" description="GTPase Obg">
    <location>
        <begin position="1"/>
        <end position="390"/>
    </location>
</feature>
<feature type="domain" description="Obg" evidence="2">
    <location>
        <begin position="1"/>
        <end position="159"/>
    </location>
</feature>
<feature type="domain" description="OBG-type G" evidence="1">
    <location>
        <begin position="160"/>
        <end position="333"/>
    </location>
</feature>
<feature type="region of interest" description="Disordered" evidence="3">
    <location>
        <begin position="127"/>
        <end position="147"/>
    </location>
</feature>
<feature type="compositionally biased region" description="Polar residues" evidence="3">
    <location>
        <begin position="129"/>
        <end position="145"/>
    </location>
</feature>
<feature type="binding site" evidence="1">
    <location>
        <begin position="166"/>
        <end position="173"/>
    </location>
    <ligand>
        <name>GTP</name>
        <dbReference type="ChEBI" id="CHEBI:37565"/>
    </ligand>
</feature>
<feature type="binding site" evidence="1">
    <location>
        <position position="173"/>
    </location>
    <ligand>
        <name>Mg(2+)</name>
        <dbReference type="ChEBI" id="CHEBI:18420"/>
    </ligand>
</feature>
<feature type="binding site" evidence="1">
    <location>
        <begin position="191"/>
        <end position="195"/>
    </location>
    <ligand>
        <name>GTP</name>
        <dbReference type="ChEBI" id="CHEBI:37565"/>
    </ligand>
</feature>
<feature type="binding site" evidence="1">
    <location>
        <position position="193"/>
    </location>
    <ligand>
        <name>Mg(2+)</name>
        <dbReference type="ChEBI" id="CHEBI:18420"/>
    </ligand>
</feature>
<feature type="binding site" evidence="1">
    <location>
        <begin position="213"/>
        <end position="216"/>
    </location>
    <ligand>
        <name>GTP</name>
        <dbReference type="ChEBI" id="CHEBI:37565"/>
    </ligand>
</feature>
<feature type="binding site" evidence="1">
    <location>
        <begin position="283"/>
        <end position="286"/>
    </location>
    <ligand>
        <name>GTP</name>
        <dbReference type="ChEBI" id="CHEBI:37565"/>
    </ligand>
</feature>
<feature type="binding site" evidence="1">
    <location>
        <begin position="314"/>
        <end position="316"/>
    </location>
    <ligand>
        <name>GTP</name>
        <dbReference type="ChEBI" id="CHEBI:37565"/>
    </ligand>
</feature>
<gene>
    <name evidence="1" type="primary">obg</name>
    <name type="ordered locus">E2348C_3462</name>
</gene>
<evidence type="ECO:0000255" key="1">
    <source>
        <dbReference type="HAMAP-Rule" id="MF_01454"/>
    </source>
</evidence>
<evidence type="ECO:0000255" key="2">
    <source>
        <dbReference type="PROSITE-ProRule" id="PRU01231"/>
    </source>
</evidence>
<evidence type="ECO:0000256" key="3">
    <source>
        <dbReference type="SAM" id="MobiDB-lite"/>
    </source>
</evidence>
<organism>
    <name type="scientific">Escherichia coli O127:H6 (strain E2348/69 / EPEC)</name>
    <dbReference type="NCBI Taxonomy" id="574521"/>
    <lineage>
        <taxon>Bacteria</taxon>
        <taxon>Pseudomonadati</taxon>
        <taxon>Pseudomonadota</taxon>
        <taxon>Gammaproteobacteria</taxon>
        <taxon>Enterobacterales</taxon>
        <taxon>Enterobacteriaceae</taxon>
        <taxon>Escherichia</taxon>
    </lineage>
</organism>
<proteinExistence type="inferred from homology"/>
<accession>B7UJ76</accession>
<name>OBG_ECO27</name>
<keyword id="KW-0963">Cytoplasm</keyword>
<keyword id="KW-0342">GTP-binding</keyword>
<keyword id="KW-0378">Hydrolase</keyword>
<keyword id="KW-0460">Magnesium</keyword>
<keyword id="KW-0479">Metal-binding</keyword>
<keyword id="KW-0547">Nucleotide-binding</keyword>
<keyword id="KW-1185">Reference proteome</keyword>
<comment type="function">
    <text evidence="1">An essential GTPase which binds GTP, GDP and possibly (p)ppGpp with moderate affinity, with high nucleotide exchange rates and a fairly low GTP hydrolysis rate. Plays a role in control of the cell cycle, stress response, ribosome biogenesis and in those bacteria that undergo differentiation, in morphogenesis control.</text>
</comment>
<comment type="cofactor">
    <cofactor evidence="1">
        <name>Mg(2+)</name>
        <dbReference type="ChEBI" id="CHEBI:18420"/>
    </cofactor>
</comment>
<comment type="subunit">
    <text evidence="1">Monomer.</text>
</comment>
<comment type="subcellular location">
    <subcellularLocation>
        <location evidence="1">Cytoplasm</location>
    </subcellularLocation>
</comment>
<comment type="similarity">
    <text evidence="1">Belongs to the TRAFAC class OBG-HflX-like GTPase superfamily. OBG GTPase family.</text>
</comment>
<dbReference type="EC" id="3.6.5.-" evidence="1"/>
<dbReference type="EMBL" id="FM180568">
    <property type="protein sequence ID" value="CAS11010.1"/>
    <property type="molecule type" value="Genomic_DNA"/>
</dbReference>
<dbReference type="SMR" id="B7UJ76"/>
<dbReference type="KEGG" id="ecg:E2348C_3462"/>
<dbReference type="HOGENOM" id="CLU_011747_2_0_6"/>
<dbReference type="Proteomes" id="UP000008205">
    <property type="component" value="Chromosome"/>
</dbReference>
<dbReference type="GO" id="GO:0005737">
    <property type="term" value="C:cytoplasm"/>
    <property type="evidence" value="ECO:0007669"/>
    <property type="project" value="UniProtKB-SubCell"/>
</dbReference>
<dbReference type="GO" id="GO:0005525">
    <property type="term" value="F:GTP binding"/>
    <property type="evidence" value="ECO:0007669"/>
    <property type="project" value="UniProtKB-UniRule"/>
</dbReference>
<dbReference type="GO" id="GO:0003924">
    <property type="term" value="F:GTPase activity"/>
    <property type="evidence" value="ECO:0007669"/>
    <property type="project" value="UniProtKB-UniRule"/>
</dbReference>
<dbReference type="GO" id="GO:0000287">
    <property type="term" value="F:magnesium ion binding"/>
    <property type="evidence" value="ECO:0007669"/>
    <property type="project" value="InterPro"/>
</dbReference>
<dbReference type="GO" id="GO:0042254">
    <property type="term" value="P:ribosome biogenesis"/>
    <property type="evidence" value="ECO:0007669"/>
    <property type="project" value="UniProtKB-UniRule"/>
</dbReference>
<dbReference type="CDD" id="cd01898">
    <property type="entry name" value="Obg"/>
    <property type="match status" value="1"/>
</dbReference>
<dbReference type="FunFam" id="2.70.210.12:FF:000001">
    <property type="entry name" value="GTPase Obg"/>
    <property type="match status" value="1"/>
</dbReference>
<dbReference type="FunFam" id="3.40.50.300:FF:000185">
    <property type="entry name" value="GTPase Obg"/>
    <property type="match status" value="1"/>
</dbReference>
<dbReference type="Gene3D" id="2.70.210.12">
    <property type="entry name" value="GTP1/OBG domain"/>
    <property type="match status" value="1"/>
</dbReference>
<dbReference type="Gene3D" id="3.40.50.300">
    <property type="entry name" value="P-loop containing nucleotide triphosphate hydrolases"/>
    <property type="match status" value="1"/>
</dbReference>
<dbReference type="HAMAP" id="MF_01454">
    <property type="entry name" value="GTPase_Obg"/>
    <property type="match status" value="1"/>
</dbReference>
<dbReference type="InterPro" id="IPR031167">
    <property type="entry name" value="G_OBG"/>
</dbReference>
<dbReference type="InterPro" id="IPR006073">
    <property type="entry name" value="GTP-bd"/>
</dbReference>
<dbReference type="InterPro" id="IPR014100">
    <property type="entry name" value="GTP-bd_Obg/CgtA"/>
</dbReference>
<dbReference type="InterPro" id="IPR006074">
    <property type="entry name" value="GTP1-OBG_CS"/>
</dbReference>
<dbReference type="InterPro" id="IPR006169">
    <property type="entry name" value="GTP1_OBG_dom"/>
</dbReference>
<dbReference type="InterPro" id="IPR036726">
    <property type="entry name" value="GTP1_OBG_dom_sf"/>
</dbReference>
<dbReference type="InterPro" id="IPR045086">
    <property type="entry name" value="OBG_GTPase"/>
</dbReference>
<dbReference type="InterPro" id="IPR027417">
    <property type="entry name" value="P-loop_NTPase"/>
</dbReference>
<dbReference type="NCBIfam" id="TIGR02729">
    <property type="entry name" value="Obg_CgtA"/>
    <property type="match status" value="1"/>
</dbReference>
<dbReference type="NCBIfam" id="NF008955">
    <property type="entry name" value="PRK12297.1"/>
    <property type="match status" value="1"/>
</dbReference>
<dbReference type="NCBIfam" id="NF008956">
    <property type="entry name" value="PRK12299.1"/>
    <property type="match status" value="1"/>
</dbReference>
<dbReference type="PANTHER" id="PTHR11702">
    <property type="entry name" value="DEVELOPMENTALLY REGULATED GTP-BINDING PROTEIN-RELATED"/>
    <property type="match status" value="1"/>
</dbReference>
<dbReference type="PANTHER" id="PTHR11702:SF31">
    <property type="entry name" value="MITOCHONDRIAL RIBOSOME-ASSOCIATED GTPASE 2"/>
    <property type="match status" value="1"/>
</dbReference>
<dbReference type="Pfam" id="PF01018">
    <property type="entry name" value="GTP1_OBG"/>
    <property type="match status" value="1"/>
</dbReference>
<dbReference type="Pfam" id="PF01926">
    <property type="entry name" value="MMR_HSR1"/>
    <property type="match status" value="1"/>
</dbReference>
<dbReference type="PIRSF" id="PIRSF002401">
    <property type="entry name" value="GTP_bd_Obg/CgtA"/>
    <property type="match status" value="1"/>
</dbReference>
<dbReference type="PRINTS" id="PR00326">
    <property type="entry name" value="GTP1OBG"/>
</dbReference>
<dbReference type="SUPFAM" id="SSF82051">
    <property type="entry name" value="Obg GTP-binding protein N-terminal domain"/>
    <property type="match status" value="1"/>
</dbReference>
<dbReference type="SUPFAM" id="SSF52540">
    <property type="entry name" value="P-loop containing nucleoside triphosphate hydrolases"/>
    <property type="match status" value="1"/>
</dbReference>
<dbReference type="PROSITE" id="PS51710">
    <property type="entry name" value="G_OBG"/>
    <property type="match status" value="1"/>
</dbReference>
<dbReference type="PROSITE" id="PS00905">
    <property type="entry name" value="GTP1_OBG"/>
    <property type="match status" value="1"/>
</dbReference>
<dbReference type="PROSITE" id="PS51883">
    <property type="entry name" value="OBG"/>
    <property type="match status" value="1"/>
</dbReference>
<protein>
    <recommendedName>
        <fullName evidence="1">GTPase Obg</fullName>
        <ecNumber evidence="1">3.6.5.-</ecNumber>
    </recommendedName>
    <alternativeName>
        <fullName evidence="1">GTP-binding protein Obg</fullName>
    </alternativeName>
</protein>
<sequence length="390" mass="43228">MKFVDEASILVVAGDGGNGCVSFRREKYIPKGGPDGGDGGDGGDVWMEADENLNTLIDYRFEKSFRAERGQNGASRDCTGKRGKDVTIKVPVGTRVIDQGTGETMGDMTKHGQRLLVAKGGWHGLGNTRFKSSVNRTPRQKTNGTPGDKRELLLELMLLADVGMLGMPNAGKSTFIRAVSAAKPKVADYPFTTLVPSLGVVRMDNEKSFVVADIPGLIEGAAEGAGLGIRFLKHLERCRVLLHLIDIDPIDGTDPVENARIIISELEKYSQDLAAKPRWLVFNKIDLLDKAEAEEKAKAIAEALGWEDKYYLISAASGLGVKDLCWDVMTFIIENPVVQAEEAKQPEKVEFMWDDYHRQQLEEIAEEDDEDWDDDWDEDDEEGVEFIYKR</sequence>